<proteinExistence type="inferred from homology"/>
<comment type="function">
    <text evidence="1">Catalyzes the hydrolysis of N-succinyl-L,L-diaminopimelic acid (SDAP), forming succinate and LL-2,6-diaminopimelate (DAP), an intermediate involved in the bacterial biosynthesis of lysine and meso-diaminopimelic acid, an essential component of bacterial cell walls.</text>
</comment>
<comment type="catalytic activity">
    <reaction evidence="1">
        <text>N-succinyl-(2S,6S)-2,6-diaminopimelate + H2O = (2S,6S)-2,6-diaminopimelate + succinate</text>
        <dbReference type="Rhea" id="RHEA:22608"/>
        <dbReference type="ChEBI" id="CHEBI:15377"/>
        <dbReference type="ChEBI" id="CHEBI:30031"/>
        <dbReference type="ChEBI" id="CHEBI:57609"/>
        <dbReference type="ChEBI" id="CHEBI:58087"/>
        <dbReference type="EC" id="3.5.1.18"/>
    </reaction>
</comment>
<comment type="cofactor">
    <cofactor evidence="1">
        <name>Zn(2+)</name>
        <dbReference type="ChEBI" id="CHEBI:29105"/>
    </cofactor>
    <cofactor evidence="1">
        <name>Co(2+)</name>
        <dbReference type="ChEBI" id="CHEBI:48828"/>
    </cofactor>
    <text evidence="1">Binds 2 Zn(2+) or Co(2+) ions per subunit.</text>
</comment>
<comment type="pathway">
    <text evidence="1">Amino-acid biosynthesis; L-lysine biosynthesis via DAP pathway; LL-2,6-diaminopimelate from (S)-tetrahydrodipicolinate (succinylase route): step 3/3.</text>
</comment>
<comment type="subunit">
    <text evidence="1">Homodimer.</text>
</comment>
<comment type="similarity">
    <text evidence="1">Belongs to the peptidase M20A family. DapE subfamily.</text>
</comment>
<dbReference type="EC" id="3.5.1.18" evidence="1"/>
<dbReference type="EMBL" id="CP000157">
    <property type="protein sequence ID" value="ABC64213.1"/>
    <property type="molecule type" value="Genomic_DNA"/>
</dbReference>
<dbReference type="RefSeq" id="WP_011415040.1">
    <property type="nucleotide sequence ID" value="NC_007722.1"/>
</dbReference>
<dbReference type="SMR" id="Q2N7X8"/>
<dbReference type="STRING" id="314225.ELI_10605"/>
<dbReference type="KEGG" id="eli:ELI_10605"/>
<dbReference type="eggNOG" id="COG0624">
    <property type="taxonomic scope" value="Bacteria"/>
</dbReference>
<dbReference type="HOGENOM" id="CLU_021802_4_0_5"/>
<dbReference type="OrthoDB" id="9809784at2"/>
<dbReference type="UniPathway" id="UPA00034">
    <property type="reaction ID" value="UER00021"/>
</dbReference>
<dbReference type="Proteomes" id="UP000008808">
    <property type="component" value="Chromosome"/>
</dbReference>
<dbReference type="GO" id="GO:0008777">
    <property type="term" value="F:acetylornithine deacetylase activity"/>
    <property type="evidence" value="ECO:0007669"/>
    <property type="project" value="TreeGrafter"/>
</dbReference>
<dbReference type="GO" id="GO:0050897">
    <property type="term" value="F:cobalt ion binding"/>
    <property type="evidence" value="ECO:0007669"/>
    <property type="project" value="UniProtKB-UniRule"/>
</dbReference>
<dbReference type="GO" id="GO:0009014">
    <property type="term" value="F:succinyl-diaminopimelate desuccinylase activity"/>
    <property type="evidence" value="ECO:0007669"/>
    <property type="project" value="UniProtKB-UniRule"/>
</dbReference>
<dbReference type="GO" id="GO:0008270">
    <property type="term" value="F:zinc ion binding"/>
    <property type="evidence" value="ECO:0007669"/>
    <property type="project" value="UniProtKB-UniRule"/>
</dbReference>
<dbReference type="GO" id="GO:0019877">
    <property type="term" value="P:diaminopimelate biosynthetic process"/>
    <property type="evidence" value="ECO:0007669"/>
    <property type="project" value="UniProtKB-UniRule"/>
</dbReference>
<dbReference type="GO" id="GO:0006526">
    <property type="term" value="P:L-arginine biosynthetic process"/>
    <property type="evidence" value="ECO:0007669"/>
    <property type="project" value="TreeGrafter"/>
</dbReference>
<dbReference type="GO" id="GO:0009089">
    <property type="term" value="P:lysine biosynthetic process via diaminopimelate"/>
    <property type="evidence" value="ECO:0007669"/>
    <property type="project" value="UniProtKB-UniRule"/>
</dbReference>
<dbReference type="CDD" id="cd03891">
    <property type="entry name" value="M20_DapE_proteobac"/>
    <property type="match status" value="1"/>
</dbReference>
<dbReference type="Gene3D" id="3.40.630.10">
    <property type="entry name" value="Zn peptidases"/>
    <property type="match status" value="2"/>
</dbReference>
<dbReference type="HAMAP" id="MF_01690">
    <property type="entry name" value="DapE"/>
    <property type="match status" value="1"/>
</dbReference>
<dbReference type="InterPro" id="IPR001261">
    <property type="entry name" value="ArgE/DapE_CS"/>
</dbReference>
<dbReference type="InterPro" id="IPR036264">
    <property type="entry name" value="Bact_exopeptidase_dim_dom"/>
</dbReference>
<dbReference type="InterPro" id="IPR005941">
    <property type="entry name" value="DapE_proteobac"/>
</dbReference>
<dbReference type="InterPro" id="IPR002933">
    <property type="entry name" value="Peptidase_M20"/>
</dbReference>
<dbReference type="InterPro" id="IPR011650">
    <property type="entry name" value="Peptidase_M20_dimer"/>
</dbReference>
<dbReference type="InterPro" id="IPR050072">
    <property type="entry name" value="Peptidase_M20A"/>
</dbReference>
<dbReference type="NCBIfam" id="TIGR01246">
    <property type="entry name" value="dapE_proteo"/>
    <property type="match status" value="1"/>
</dbReference>
<dbReference type="NCBIfam" id="NF009557">
    <property type="entry name" value="PRK13009.1"/>
    <property type="match status" value="1"/>
</dbReference>
<dbReference type="PANTHER" id="PTHR43808">
    <property type="entry name" value="ACETYLORNITHINE DEACETYLASE"/>
    <property type="match status" value="1"/>
</dbReference>
<dbReference type="PANTHER" id="PTHR43808:SF31">
    <property type="entry name" value="N-ACETYL-L-CITRULLINE DEACETYLASE"/>
    <property type="match status" value="1"/>
</dbReference>
<dbReference type="Pfam" id="PF07687">
    <property type="entry name" value="M20_dimer"/>
    <property type="match status" value="1"/>
</dbReference>
<dbReference type="Pfam" id="PF01546">
    <property type="entry name" value="Peptidase_M20"/>
    <property type="match status" value="1"/>
</dbReference>
<dbReference type="SUPFAM" id="SSF55031">
    <property type="entry name" value="Bacterial exopeptidase dimerisation domain"/>
    <property type="match status" value="1"/>
</dbReference>
<dbReference type="SUPFAM" id="SSF53187">
    <property type="entry name" value="Zn-dependent exopeptidases"/>
    <property type="match status" value="1"/>
</dbReference>
<dbReference type="PROSITE" id="PS00759">
    <property type="entry name" value="ARGE_DAPE_CPG2_2"/>
    <property type="match status" value="1"/>
</dbReference>
<sequence length="378" mass="40418">MSQALDYAKRLIAAPSVTPATGAVFDEMQAMLEPLGFAVHRFTRGEGEEGSDEAPVENLFAIRHGPEGSKHFAFAGHLDVVPPGEGWTSAPFEPEERGELLYGRGAVDMKGAIACMVDAVANVPQEAGTISFIITGDEEGPALHGTRALIDYMRSEGIKPDLCLVGEPTSVNRLGDMMKIGRRGSVNIWLEVEGTQGHVAYPHLAGNPLPAMVEILRELNNLPLDEGTDWFQPSNLEITEIDVPNRAHNVIPAKAKARISIRFNDTHSGASLSKQVIEIAEKHGGTARPVISGEPFLTEPGAFSSMIAAAVKAETAIDPEPSTTGGTSDARFLRSVCPVIEFGLCNATMHKRDEAVAMADLDTLSRIYARVAQAALSS</sequence>
<keyword id="KW-0028">Amino-acid biosynthesis</keyword>
<keyword id="KW-0170">Cobalt</keyword>
<keyword id="KW-0220">Diaminopimelate biosynthesis</keyword>
<keyword id="KW-0378">Hydrolase</keyword>
<keyword id="KW-0457">Lysine biosynthesis</keyword>
<keyword id="KW-0479">Metal-binding</keyword>
<keyword id="KW-1185">Reference proteome</keyword>
<keyword id="KW-0862">Zinc</keyword>
<gene>
    <name evidence="1" type="primary">dapE</name>
    <name type="ordered locus">ELI_10605</name>
</gene>
<feature type="chain" id="PRO_0000375552" description="Succinyl-diaminopimelate desuccinylase">
    <location>
        <begin position="1"/>
        <end position="378"/>
    </location>
</feature>
<feature type="active site" evidence="1">
    <location>
        <position position="79"/>
    </location>
</feature>
<feature type="active site" description="Proton acceptor" evidence="1">
    <location>
        <position position="138"/>
    </location>
</feature>
<feature type="binding site" evidence="1">
    <location>
        <position position="77"/>
    </location>
    <ligand>
        <name>Zn(2+)</name>
        <dbReference type="ChEBI" id="CHEBI:29105"/>
        <label>1</label>
    </ligand>
</feature>
<feature type="binding site" evidence="1">
    <location>
        <position position="108"/>
    </location>
    <ligand>
        <name>Zn(2+)</name>
        <dbReference type="ChEBI" id="CHEBI:29105"/>
        <label>1</label>
    </ligand>
</feature>
<feature type="binding site" evidence="1">
    <location>
        <position position="108"/>
    </location>
    <ligand>
        <name>Zn(2+)</name>
        <dbReference type="ChEBI" id="CHEBI:29105"/>
        <label>2</label>
    </ligand>
</feature>
<feature type="binding site" evidence="1">
    <location>
        <position position="139"/>
    </location>
    <ligand>
        <name>Zn(2+)</name>
        <dbReference type="ChEBI" id="CHEBI:29105"/>
        <label>2</label>
    </ligand>
</feature>
<feature type="binding site" evidence="1">
    <location>
        <position position="167"/>
    </location>
    <ligand>
        <name>Zn(2+)</name>
        <dbReference type="ChEBI" id="CHEBI:29105"/>
        <label>1</label>
    </ligand>
</feature>
<feature type="binding site" evidence="1">
    <location>
        <position position="350"/>
    </location>
    <ligand>
        <name>Zn(2+)</name>
        <dbReference type="ChEBI" id="CHEBI:29105"/>
        <label>2</label>
    </ligand>
</feature>
<accession>Q2N7X8</accession>
<name>DAPE_ERYLH</name>
<reference key="1">
    <citation type="journal article" date="2009" name="J. Bacteriol.">
        <title>Complete genome sequence of Erythrobacter litoralis HTCC2594.</title>
        <authorList>
            <person name="Oh H.M."/>
            <person name="Giovannoni S.J."/>
            <person name="Ferriera S."/>
            <person name="Johnson J."/>
            <person name="Cho J.C."/>
        </authorList>
    </citation>
    <scope>NUCLEOTIDE SEQUENCE [LARGE SCALE GENOMIC DNA]</scope>
    <source>
        <strain>HTCC2594</strain>
    </source>
</reference>
<organism>
    <name type="scientific">Erythrobacter litoralis (strain HTCC2594)</name>
    <dbReference type="NCBI Taxonomy" id="314225"/>
    <lineage>
        <taxon>Bacteria</taxon>
        <taxon>Pseudomonadati</taxon>
        <taxon>Pseudomonadota</taxon>
        <taxon>Alphaproteobacteria</taxon>
        <taxon>Sphingomonadales</taxon>
        <taxon>Erythrobacteraceae</taxon>
        <taxon>Erythrobacter/Porphyrobacter group</taxon>
        <taxon>Erythrobacter</taxon>
    </lineage>
</organism>
<protein>
    <recommendedName>
        <fullName evidence="1">Succinyl-diaminopimelate desuccinylase</fullName>
        <shortName evidence="1">SDAP desuccinylase</shortName>
        <ecNumber evidence="1">3.5.1.18</ecNumber>
    </recommendedName>
    <alternativeName>
        <fullName evidence="1">N-succinyl-LL-2,6-diaminoheptanedioate amidohydrolase</fullName>
    </alternativeName>
</protein>
<evidence type="ECO:0000255" key="1">
    <source>
        <dbReference type="HAMAP-Rule" id="MF_01690"/>
    </source>
</evidence>